<comment type="function">
    <text evidence="1">Involved in protein export. Acts as a chaperone by maintaining the newly synthesized protein in an open conformation. Functions as a peptidyl-prolyl cis-trans isomerase.</text>
</comment>
<comment type="catalytic activity">
    <reaction evidence="1">
        <text>[protein]-peptidylproline (omega=180) = [protein]-peptidylproline (omega=0)</text>
        <dbReference type="Rhea" id="RHEA:16237"/>
        <dbReference type="Rhea" id="RHEA-COMP:10747"/>
        <dbReference type="Rhea" id="RHEA-COMP:10748"/>
        <dbReference type="ChEBI" id="CHEBI:83833"/>
        <dbReference type="ChEBI" id="CHEBI:83834"/>
        <dbReference type="EC" id="5.2.1.8"/>
    </reaction>
</comment>
<comment type="subcellular location">
    <subcellularLocation>
        <location>Cytoplasm</location>
    </subcellularLocation>
    <text evidence="1">About half TF is bound to the ribosome near the polypeptide exit tunnel while the other half is free in the cytoplasm.</text>
</comment>
<comment type="domain">
    <text evidence="1">Consists of 3 domains; the N-terminus binds the ribosome, the middle domain has PPIase activity, while the C-terminus has intrinsic chaperone activity on its own.</text>
</comment>
<comment type="similarity">
    <text evidence="1">Belongs to the FKBP-type PPIase family. Tig subfamily.</text>
</comment>
<reference key="1">
    <citation type="submission" date="2006-03" db="EMBL/GenBank/DDBJ databases">
        <title>Complete genome sequence of Francisella tularensis LVS (Live Vaccine Strain).</title>
        <authorList>
            <person name="Chain P."/>
            <person name="Larimer F."/>
            <person name="Land M."/>
            <person name="Stilwagen S."/>
            <person name="Larsson P."/>
            <person name="Bearden S."/>
            <person name="Chu M."/>
            <person name="Oyston P."/>
            <person name="Forsman M."/>
            <person name="Andersson S."/>
            <person name="Lindler L."/>
            <person name="Titball R."/>
            <person name="Garcia E."/>
        </authorList>
    </citation>
    <scope>NUCLEOTIDE SEQUENCE [LARGE SCALE GENOMIC DNA]</scope>
    <source>
        <strain>LVS</strain>
    </source>
</reference>
<sequence length="438" mass="49571">MQVTLEKKEGIHCSLLIEVPANEIDSVVSKEINRTAKTIKMDGFRPGKVPAGMVKKKYGEQIRMEVISDLIPQKYSKAIQDEKLAVAGIEVELKENKEGQPLKFVANLELFPEFEVTGFEKIEVQKPVVELTDKEVKQMIDNLRKQFATFSEVYKVVEKDDKVTIDFVGKKDGEAFEGGTANDIDVIIGSGQMIPGFEDGIIGMKKGEQKTITVTFPQDYQNKDLAGAETTFDITVKKIQQAELPEVNDEFVKKFGVKGGVDTFENEIKENMQRELKFILQRKVKDQVFKGLREIAKFETPKSLIKREIDAAKQNLLKQMGGAKGFDVNQLPDNLFEANAKQKVETSLILDSIMNSQEFKAEEAEVESLLDELVQAYEEPEKTKEQIKKNDKEIANLKALVIENKLTDWVLEQAKVTEKTEDFFEVIKENMQAQQAGF</sequence>
<keyword id="KW-0131">Cell cycle</keyword>
<keyword id="KW-0132">Cell division</keyword>
<keyword id="KW-0143">Chaperone</keyword>
<keyword id="KW-0963">Cytoplasm</keyword>
<keyword id="KW-0413">Isomerase</keyword>
<keyword id="KW-1185">Reference proteome</keyword>
<keyword id="KW-0697">Rotamase</keyword>
<name>TIG_FRATH</name>
<gene>
    <name evidence="1" type="primary">tig</name>
    <name type="ordered locus">FTL_0891</name>
</gene>
<dbReference type="EC" id="5.2.1.8" evidence="1"/>
<dbReference type="EMBL" id="AM233362">
    <property type="protein sequence ID" value="CAJ79330.1"/>
    <property type="molecule type" value="Genomic_DNA"/>
</dbReference>
<dbReference type="RefSeq" id="WP_011457436.1">
    <property type="nucleotide sequence ID" value="NZ_CP009694.1"/>
</dbReference>
<dbReference type="SMR" id="Q2A3U2"/>
<dbReference type="KEGG" id="ftl:FTL_0891"/>
<dbReference type="Proteomes" id="UP000001944">
    <property type="component" value="Chromosome"/>
</dbReference>
<dbReference type="GO" id="GO:0005737">
    <property type="term" value="C:cytoplasm"/>
    <property type="evidence" value="ECO:0007669"/>
    <property type="project" value="UniProtKB-SubCell"/>
</dbReference>
<dbReference type="GO" id="GO:0003755">
    <property type="term" value="F:peptidyl-prolyl cis-trans isomerase activity"/>
    <property type="evidence" value="ECO:0007669"/>
    <property type="project" value="UniProtKB-UniRule"/>
</dbReference>
<dbReference type="GO" id="GO:0044183">
    <property type="term" value="F:protein folding chaperone"/>
    <property type="evidence" value="ECO:0007669"/>
    <property type="project" value="TreeGrafter"/>
</dbReference>
<dbReference type="GO" id="GO:0043022">
    <property type="term" value="F:ribosome binding"/>
    <property type="evidence" value="ECO:0007669"/>
    <property type="project" value="TreeGrafter"/>
</dbReference>
<dbReference type="GO" id="GO:0051083">
    <property type="term" value="P:'de novo' cotranslational protein folding"/>
    <property type="evidence" value="ECO:0007669"/>
    <property type="project" value="TreeGrafter"/>
</dbReference>
<dbReference type="GO" id="GO:0051301">
    <property type="term" value="P:cell division"/>
    <property type="evidence" value="ECO:0007669"/>
    <property type="project" value="UniProtKB-KW"/>
</dbReference>
<dbReference type="GO" id="GO:0061077">
    <property type="term" value="P:chaperone-mediated protein folding"/>
    <property type="evidence" value="ECO:0007669"/>
    <property type="project" value="TreeGrafter"/>
</dbReference>
<dbReference type="GO" id="GO:0015031">
    <property type="term" value="P:protein transport"/>
    <property type="evidence" value="ECO:0007669"/>
    <property type="project" value="UniProtKB-UniRule"/>
</dbReference>
<dbReference type="GO" id="GO:0043335">
    <property type="term" value="P:protein unfolding"/>
    <property type="evidence" value="ECO:0007669"/>
    <property type="project" value="TreeGrafter"/>
</dbReference>
<dbReference type="FunFam" id="3.10.50.40:FF:000001">
    <property type="entry name" value="Trigger factor"/>
    <property type="match status" value="1"/>
</dbReference>
<dbReference type="Gene3D" id="3.10.50.40">
    <property type="match status" value="1"/>
</dbReference>
<dbReference type="Gene3D" id="3.30.70.1050">
    <property type="entry name" value="Trigger factor ribosome-binding domain"/>
    <property type="match status" value="1"/>
</dbReference>
<dbReference type="Gene3D" id="1.10.3120.10">
    <property type="entry name" value="Trigger factor, C-terminal domain"/>
    <property type="match status" value="1"/>
</dbReference>
<dbReference type="HAMAP" id="MF_00303">
    <property type="entry name" value="Trigger_factor_Tig"/>
    <property type="match status" value="1"/>
</dbReference>
<dbReference type="InterPro" id="IPR046357">
    <property type="entry name" value="PPIase_dom_sf"/>
</dbReference>
<dbReference type="InterPro" id="IPR001179">
    <property type="entry name" value="PPIase_FKBP_dom"/>
</dbReference>
<dbReference type="InterPro" id="IPR005215">
    <property type="entry name" value="Trig_fac"/>
</dbReference>
<dbReference type="InterPro" id="IPR008880">
    <property type="entry name" value="Trigger_fac_C"/>
</dbReference>
<dbReference type="InterPro" id="IPR037041">
    <property type="entry name" value="Trigger_fac_C_sf"/>
</dbReference>
<dbReference type="InterPro" id="IPR008881">
    <property type="entry name" value="Trigger_fac_ribosome-bd_bac"/>
</dbReference>
<dbReference type="InterPro" id="IPR036611">
    <property type="entry name" value="Trigger_fac_ribosome-bd_sf"/>
</dbReference>
<dbReference type="InterPro" id="IPR027304">
    <property type="entry name" value="Trigger_fact/SurA_dom_sf"/>
</dbReference>
<dbReference type="NCBIfam" id="TIGR00115">
    <property type="entry name" value="tig"/>
    <property type="match status" value="1"/>
</dbReference>
<dbReference type="PANTHER" id="PTHR30560">
    <property type="entry name" value="TRIGGER FACTOR CHAPERONE AND PEPTIDYL-PROLYL CIS/TRANS ISOMERASE"/>
    <property type="match status" value="1"/>
</dbReference>
<dbReference type="PANTHER" id="PTHR30560:SF3">
    <property type="entry name" value="TRIGGER FACTOR-LIKE PROTEIN TIG, CHLOROPLASTIC"/>
    <property type="match status" value="1"/>
</dbReference>
<dbReference type="Pfam" id="PF00254">
    <property type="entry name" value="FKBP_C"/>
    <property type="match status" value="1"/>
</dbReference>
<dbReference type="Pfam" id="PF05698">
    <property type="entry name" value="Trigger_C"/>
    <property type="match status" value="1"/>
</dbReference>
<dbReference type="Pfam" id="PF05697">
    <property type="entry name" value="Trigger_N"/>
    <property type="match status" value="1"/>
</dbReference>
<dbReference type="PIRSF" id="PIRSF003095">
    <property type="entry name" value="Trigger_factor"/>
    <property type="match status" value="1"/>
</dbReference>
<dbReference type="SUPFAM" id="SSF54534">
    <property type="entry name" value="FKBP-like"/>
    <property type="match status" value="1"/>
</dbReference>
<dbReference type="SUPFAM" id="SSF109998">
    <property type="entry name" value="Triger factor/SurA peptide-binding domain-like"/>
    <property type="match status" value="1"/>
</dbReference>
<dbReference type="SUPFAM" id="SSF102735">
    <property type="entry name" value="Trigger factor ribosome-binding domain"/>
    <property type="match status" value="1"/>
</dbReference>
<dbReference type="PROSITE" id="PS50059">
    <property type="entry name" value="FKBP_PPIASE"/>
    <property type="match status" value="1"/>
</dbReference>
<feature type="chain" id="PRO_0000256560" description="Trigger factor">
    <location>
        <begin position="1"/>
        <end position="438"/>
    </location>
</feature>
<feature type="domain" description="PPIase FKBP-type" evidence="1">
    <location>
        <begin position="160"/>
        <end position="245"/>
    </location>
</feature>
<accession>Q2A3U2</accession>
<protein>
    <recommendedName>
        <fullName evidence="1">Trigger factor</fullName>
        <shortName evidence="1">TF</shortName>
        <ecNumber evidence="1">5.2.1.8</ecNumber>
    </recommendedName>
    <alternativeName>
        <fullName evidence="1">PPIase</fullName>
    </alternativeName>
</protein>
<evidence type="ECO:0000255" key="1">
    <source>
        <dbReference type="HAMAP-Rule" id="MF_00303"/>
    </source>
</evidence>
<proteinExistence type="inferred from homology"/>
<organism>
    <name type="scientific">Francisella tularensis subsp. holarctica (strain LVS)</name>
    <dbReference type="NCBI Taxonomy" id="376619"/>
    <lineage>
        <taxon>Bacteria</taxon>
        <taxon>Pseudomonadati</taxon>
        <taxon>Pseudomonadota</taxon>
        <taxon>Gammaproteobacteria</taxon>
        <taxon>Thiotrichales</taxon>
        <taxon>Francisellaceae</taxon>
        <taxon>Francisella</taxon>
    </lineage>
</organism>